<name>SYC_ENTFA</name>
<feature type="chain" id="PRO_0000159397" description="Cysteine--tRNA ligase">
    <location>
        <begin position="1"/>
        <end position="470"/>
    </location>
</feature>
<feature type="short sequence motif" description="'HIGH' region">
    <location>
        <begin position="30"/>
        <end position="40"/>
    </location>
</feature>
<feature type="short sequence motif" description="'KMSKS' region">
    <location>
        <begin position="270"/>
        <end position="274"/>
    </location>
</feature>
<feature type="binding site" evidence="1">
    <location>
        <position position="28"/>
    </location>
    <ligand>
        <name>Zn(2+)</name>
        <dbReference type="ChEBI" id="CHEBI:29105"/>
    </ligand>
</feature>
<feature type="binding site" evidence="1">
    <location>
        <position position="211"/>
    </location>
    <ligand>
        <name>Zn(2+)</name>
        <dbReference type="ChEBI" id="CHEBI:29105"/>
    </ligand>
</feature>
<feature type="binding site" evidence="1">
    <location>
        <position position="236"/>
    </location>
    <ligand>
        <name>Zn(2+)</name>
        <dbReference type="ChEBI" id="CHEBI:29105"/>
    </ligand>
</feature>
<feature type="binding site" evidence="1">
    <location>
        <position position="240"/>
    </location>
    <ligand>
        <name>Zn(2+)</name>
        <dbReference type="ChEBI" id="CHEBI:29105"/>
    </ligand>
</feature>
<feature type="binding site" evidence="1">
    <location>
        <position position="273"/>
    </location>
    <ligand>
        <name>ATP</name>
        <dbReference type="ChEBI" id="CHEBI:30616"/>
    </ligand>
</feature>
<keyword id="KW-0030">Aminoacyl-tRNA synthetase</keyword>
<keyword id="KW-0067">ATP-binding</keyword>
<keyword id="KW-0963">Cytoplasm</keyword>
<keyword id="KW-0436">Ligase</keyword>
<keyword id="KW-0479">Metal-binding</keyword>
<keyword id="KW-0547">Nucleotide-binding</keyword>
<keyword id="KW-0648">Protein biosynthesis</keyword>
<keyword id="KW-1185">Reference proteome</keyword>
<keyword id="KW-0862">Zinc</keyword>
<dbReference type="EC" id="6.1.1.16" evidence="1"/>
<dbReference type="EMBL" id="AE016830">
    <property type="protein sequence ID" value="AAO79927.1"/>
    <property type="molecule type" value="Genomic_DNA"/>
</dbReference>
<dbReference type="RefSeq" id="NP_813855.1">
    <property type="nucleotide sequence ID" value="NC_004668.1"/>
</dbReference>
<dbReference type="RefSeq" id="WP_010774249.1">
    <property type="nucleotide sequence ID" value="NZ_KE136524.1"/>
</dbReference>
<dbReference type="SMR" id="Q839V5"/>
<dbReference type="STRING" id="226185.EF_0045"/>
<dbReference type="EnsemblBacteria" id="AAO79927">
    <property type="protein sequence ID" value="AAO79927"/>
    <property type="gene ID" value="EF_0045"/>
</dbReference>
<dbReference type="KEGG" id="efa:EF0045"/>
<dbReference type="PATRIC" id="fig|226185.45.peg.211"/>
<dbReference type="eggNOG" id="COG0215">
    <property type="taxonomic scope" value="Bacteria"/>
</dbReference>
<dbReference type="HOGENOM" id="CLU_013528_0_1_9"/>
<dbReference type="Proteomes" id="UP000001415">
    <property type="component" value="Chromosome"/>
</dbReference>
<dbReference type="GO" id="GO:0005829">
    <property type="term" value="C:cytosol"/>
    <property type="evidence" value="ECO:0007669"/>
    <property type="project" value="TreeGrafter"/>
</dbReference>
<dbReference type="GO" id="GO:0005524">
    <property type="term" value="F:ATP binding"/>
    <property type="evidence" value="ECO:0007669"/>
    <property type="project" value="UniProtKB-UniRule"/>
</dbReference>
<dbReference type="GO" id="GO:0004817">
    <property type="term" value="F:cysteine-tRNA ligase activity"/>
    <property type="evidence" value="ECO:0007669"/>
    <property type="project" value="UniProtKB-UniRule"/>
</dbReference>
<dbReference type="GO" id="GO:0008270">
    <property type="term" value="F:zinc ion binding"/>
    <property type="evidence" value="ECO:0007669"/>
    <property type="project" value="UniProtKB-UniRule"/>
</dbReference>
<dbReference type="GO" id="GO:0006423">
    <property type="term" value="P:cysteinyl-tRNA aminoacylation"/>
    <property type="evidence" value="ECO:0007669"/>
    <property type="project" value="UniProtKB-UniRule"/>
</dbReference>
<dbReference type="CDD" id="cd00672">
    <property type="entry name" value="CysRS_core"/>
    <property type="match status" value="1"/>
</dbReference>
<dbReference type="FunFam" id="3.40.50.620:FF:000009">
    <property type="entry name" value="Cysteine--tRNA ligase"/>
    <property type="match status" value="1"/>
</dbReference>
<dbReference type="Gene3D" id="1.20.120.1910">
    <property type="entry name" value="Cysteine-tRNA ligase, C-terminal anti-codon recognition domain"/>
    <property type="match status" value="1"/>
</dbReference>
<dbReference type="Gene3D" id="3.40.50.620">
    <property type="entry name" value="HUPs"/>
    <property type="match status" value="1"/>
</dbReference>
<dbReference type="HAMAP" id="MF_00041">
    <property type="entry name" value="Cys_tRNA_synth"/>
    <property type="match status" value="1"/>
</dbReference>
<dbReference type="InterPro" id="IPR015803">
    <property type="entry name" value="Cys-tRNA-ligase"/>
</dbReference>
<dbReference type="InterPro" id="IPR015273">
    <property type="entry name" value="Cys-tRNA-synt_Ia_DALR"/>
</dbReference>
<dbReference type="InterPro" id="IPR024909">
    <property type="entry name" value="Cys-tRNA/MSH_ligase"/>
</dbReference>
<dbReference type="InterPro" id="IPR056411">
    <property type="entry name" value="CysS_C"/>
</dbReference>
<dbReference type="InterPro" id="IPR014729">
    <property type="entry name" value="Rossmann-like_a/b/a_fold"/>
</dbReference>
<dbReference type="InterPro" id="IPR032678">
    <property type="entry name" value="tRNA-synt_1_cat_dom"/>
</dbReference>
<dbReference type="InterPro" id="IPR009080">
    <property type="entry name" value="tRNAsynth_Ia_anticodon-bd"/>
</dbReference>
<dbReference type="NCBIfam" id="TIGR00435">
    <property type="entry name" value="cysS"/>
    <property type="match status" value="1"/>
</dbReference>
<dbReference type="PANTHER" id="PTHR10890:SF3">
    <property type="entry name" value="CYSTEINE--TRNA LIGASE, CYTOPLASMIC"/>
    <property type="match status" value="1"/>
</dbReference>
<dbReference type="PANTHER" id="PTHR10890">
    <property type="entry name" value="CYSTEINYL-TRNA SYNTHETASE"/>
    <property type="match status" value="1"/>
</dbReference>
<dbReference type="Pfam" id="PF23493">
    <property type="entry name" value="CysS_C"/>
    <property type="match status" value="1"/>
</dbReference>
<dbReference type="Pfam" id="PF09190">
    <property type="entry name" value="DALR_2"/>
    <property type="match status" value="1"/>
</dbReference>
<dbReference type="Pfam" id="PF01406">
    <property type="entry name" value="tRNA-synt_1e"/>
    <property type="match status" value="1"/>
</dbReference>
<dbReference type="PRINTS" id="PR00983">
    <property type="entry name" value="TRNASYNTHCYS"/>
</dbReference>
<dbReference type="SMART" id="SM00840">
    <property type="entry name" value="DALR_2"/>
    <property type="match status" value="1"/>
</dbReference>
<dbReference type="SUPFAM" id="SSF47323">
    <property type="entry name" value="Anticodon-binding domain of a subclass of class I aminoacyl-tRNA synthetases"/>
    <property type="match status" value="1"/>
</dbReference>
<dbReference type="SUPFAM" id="SSF52374">
    <property type="entry name" value="Nucleotidylyl transferase"/>
    <property type="match status" value="1"/>
</dbReference>
<organism>
    <name type="scientific">Enterococcus faecalis (strain ATCC 700802 / V583)</name>
    <dbReference type="NCBI Taxonomy" id="226185"/>
    <lineage>
        <taxon>Bacteria</taxon>
        <taxon>Bacillati</taxon>
        <taxon>Bacillota</taxon>
        <taxon>Bacilli</taxon>
        <taxon>Lactobacillales</taxon>
        <taxon>Enterococcaceae</taxon>
        <taxon>Enterococcus</taxon>
    </lineage>
</organism>
<protein>
    <recommendedName>
        <fullName evidence="1">Cysteine--tRNA ligase</fullName>
        <ecNumber evidence="1">6.1.1.16</ecNumber>
    </recommendedName>
    <alternativeName>
        <fullName evidence="1">Cysteinyl-tRNA synthetase</fullName>
        <shortName evidence="1">CysRS</shortName>
    </alternativeName>
</protein>
<reference key="1">
    <citation type="journal article" date="2003" name="Science">
        <title>Role of mobile DNA in the evolution of vancomycin-resistant Enterococcus faecalis.</title>
        <authorList>
            <person name="Paulsen I.T."/>
            <person name="Banerjei L."/>
            <person name="Myers G.S.A."/>
            <person name="Nelson K.E."/>
            <person name="Seshadri R."/>
            <person name="Read T.D."/>
            <person name="Fouts D.E."/>
            <person name="Eisen J.A."/>
            <person name="Gill S.R."/>
            <person name="Heidelberg J.F."/>
            <person name="Tettelin H."/>
            <person name="Dodson R.J."/>
            <person name="Umayam L.A."/>
            <person name="Brinkac L.M."/>
            <person name="Beanan M.J."/>
            <person name="Daugherty S.C."/>
            <person name="DeBoy R.T."/>
            <person name="Durkin S.A."/>
            <person name="Kolonay J.F."/>
            <person name="Madupu R."/>
            <person name="Nelson W.C."/>
            <person name="Vamathevan J.J."/>
            <person name="Tran B."/>
            <person name="Upton J."/>
            <person name="Hansen T."/>
            <person name="Shetty J."/>
            <person name="Khouri H.M."/>
            <person name="Utterback T.R."/>
            <person name="Radune D."/>
            <person name="Ketchum K.A."/>
            <person name="Dougherty B.A."/>
            <person name="Fraser C.M."/>
        </authorList>
    </citation>
    <scope>NUCLEOTIDE SEQUENCE [LARGE SCALE GENOMIC DNA]</scope>
    <source>
        <strain>ATCC 700802 / V583</strain>
    </source>
</reference>
<accession>Q839V5</accession>
<gene>
    <name evidence="1" type="primary">cysS</name>
    <name type="ordered locus">EF_0045</name>
</gene>
<evidence type="ECO:0000255" key="1">
    <source>
        <dbReference type="HAMAP-Rule" id="MF_00041"/>
    </source>
</evidence>
<comment type="catalytic activity">
    <reaction evidence="1">
        <text>tRNA(Cys) + L-cysteine + ATP = L-cysteinyl-tRNA(Cys) + AMP + diphosphate</text>
        <dbReference type="Rhea" id="RHEA:17773"/>
        <dbReference type="Rhea" id="RHEA-COMP:9661"/>
        <dbReference type="Rhea" id="RHEA-COMP:9679"/>
        <dbReference type="ChEBI" id="CHEBI:30616"/>
        <dbReference type="ChEBI" id="CHEBI:33019"/>
        <dbReference type="ChEBI" id="CHEBI:35235"/>
        <dbReference type="ChEBI" id="CHEBI:78442"/>
        <dbReference type="ChEBI" id="CHEBI:78517"/>
        <dbReference type="ChEBI" id="CHEBI:456215"/>
        <dbReference type="EC" id="6.1.1.16"/>
    </reaction>
</comment>
<comment type="cofactor">
    <cofactor evidence="1">
        <name>Zn(2+)</name>
        <dbReference type="ChEBI" id="CHEBI:29105"/>
    </cofactor>
    <text evidence="1">Binds 1 zinc ion per subunit.</text>
</comment>
<comment type="subunit">
    <text evidence="1">Monomer.</text>
</comment>
<comment type="subcellular location">
    <subcellularLocation>
        <location evidence="1">Cytoplasm</location>
    </subcellularLocation>
</comment>
<comment type="similarity">
    <text evidence="1">Belongs to the class-I aminoacyl-tRNA synthetase family.</text>
</comment>
<proteinExistence type="inferred from homology"/>
<sequence length="470" mass="54411">MIKIYNTLTREKEVFTPIEARKVRMYVCGPTVYNYIHIGNARSAIAFDTIRRYFEYRGYEVNYVSNFTDVDDKIIKAAKELKITAPEVAERFIKAFEEDTQALNVQPATLHPRVMDHMPDILAFIEVLIEKGFAYEVAGDVYYRTRKFPNYGKLSHQSIDELEVGASQRTGVEQQLKEDPLDFALWKSAKEDEISWDSPWGKGRPGWHIECSVMATKHLEETIDIHGGGQDLEFPHHENEIAQSEAKTGHTFANYWMHNGYVTIGEDDEKMSKSLGNFITVHEMIQKVDPQILRFFMSTTQYRRPIRYSESTLKEAAANYQKLKNAFENLRFRQADAVASLPEDEHYLAQLNELEQRFITEMDDDFNAANGITVVYELAKMMNQYSEQATVSEPVLVAMDKLFSGWLAIFGLFFKNEELVDAQVDALIEERNQARKDRDFARSDEIRDLLKEQGIVLEDTPQGTRWRRSE</sequence>